<proteinExistence type="inferred from homology"/>
<organism>
    <name type="scientific">Erythrobacter litoralis (strain HTCC2594)</name>
    <dbReference type="NCBI Taxonomy" id="314225"/>
    <lineage>
        <taxon>Bacteria</taxon>
        <taxon>Pseudomonadati</taxon>
        <taxon>Pseudomonadota</taxon>
        <taxon>Alphaproteobacteria</taxon>
        <taxon>Sphingomonadales</taxon>
        <taxon>Erythrobacteraceae</taxon>
        <taxon>Erythrobacter/Porphyrobacter group</taxon>
        <taxon>Erythrobacter</taxon>
    </lineage>
</organism>
<name>LIPA_ERYLH</name>
<keyword id="KW-0004">4Fe-4S</keyword>
<keyword id="KW-0963">Cytoplasm</keyword>
<keyword id="KW-0408">Iron</keyword>
<keyword id="KW-0411">Iron-sulfur</keyword>
<keyword id="KW-0479">Metal-binding</keyword>
<keyword id="KW-1185">Reference proteome</keyword>
<keyword id="KW-0949">S-adenosyl-L-methionine</keyword>
<keyword id="KW-0808">Transferase</keyword>
<feature type="chain" id="PRO_1000012222" description="Lipoyl synthase">
    <location>
        <begin position="1"/>
        <end position="320"/>
    </location>
</feature>
<feature type="domain" description="Radical SAM core" evidence="2">
    <location>
        <begin position="65"/>
        <end position="282"/>
    </location>
</feature>
<feature type="region of interest" description="Disordered" evidence="3">
    <location>
        <begin position="1"/>
        <end position="24"/>
    </location>
</feature>
<feature type="compositionally biased region" description="Polar residues" evidence="3">
    <location>
        <begin position="1"/>
        <end position="11"/>
    </location>
</feature>
<feature type="compositionally biased region" description="Basic and acidic residues" evidence="3">
    <location>
        <begin position="14"/>
        <end position="24"/>
    </location>
</feature>
<feature type="binding site" evidence="1">
    <location>
        <position position="53"/>
    </location>
    <ligand>
        <name>[4Fe-4S] cluster</name>
        <dbReference type="ChEBI" id="CHEBI:49883"/>
        <label>1</label>
    </ligand>
</feature>
<feature type="binding site" evidence="1">
    <location>
        <position position="58"/>
    </location>
    <ligand>
        <name>[4Fe-4S] cluster</name>
        <dbReference type="ChEBI" id="CHEBI:49883"/>
        <label>1</label>
    </ligand>
</feature>
<feature type="binding site" evidence="1">
    <location>
        <position position="64"/>
    </location>
    <ligand>
        <name>[4Fe-4S] cluster</name>
        <dbReference type="ChEBI" id="CHEBI:49883"/>
        <label>1</label>
    </ligand>
</feature>
<feature type="binding site" evidence="1">
    <location>
        <position position="79"/>
    </location>
    <ligand>
        <name>[4Fe-4S] cluster</name>
        <dbReference type="ChEBI" id="CHEBI:49883"/>
        <label>2</label>
        <note>4Fe-4S-S-AdoMet</note>
    </ligand>
</feature>
<feature type="binding site" evidence="1">
    <location>
        <position position="83"/>
    </location>
    <ligand>
        <name>[4Fe-4S] cluster</name>
        <dbReference type="ChEBI" id="CHEBI:49883"/>
        <label>2</label>
        <note>4Fe-4S-S-AdoMet</note>
    </ligand>
</feature>
<feature type="binding site" evidence="1">
    <location>
        <position position="86"/>
    </location>
    <ligand>
        <name>[4Fe-4S] cluster</name>
        <dbReference type="ChEBI" id="CHEBI:49883"/>
        <label>2</label>
        <note>4Fe-4S-S-AdoMet</note>
    </ligand>
</feature>
<feature type="binding site" evidence="1">
    <location>
        <position position="293"/>
    </location>
    <ligand>
        <name>[4Fe-4S] cluster</name>
        <dbReference type="ChEBI" id="CHEBI:49883"/>
        <label>1</label>
    </ligand>
</feature>
<evidence type="ECO:0000255" key="1">
    <source>
        <dbReference type="HAMAP-Rule" id="MF_00206"/>
    </source>
</evidence>
<evidence type="ECO:0000255" key="2">
    <source>
        <dbReference type="PROSITE-ProRule" id="PRU01266"/>
    </source>
</evidence>
<evidence type="ECO:0000256" key="3">
    <source>
        <dbReference type="SAM" id="MobiDB-lite"/>
    </source>
</evidence>
<accession>Q2NAD7</accession>
<sequence length="320" mass="35443">MGGMNDLSSTPAPEGDRPARQRKPDWIRVKAPVSKGYHETRKLMRELNLNTVCEEAACPNIGECWTKKHATVMILGDVCTRACAFCNVKTGMPRIVDPMEPENTAIAAAKMGLQHIVITSVDRDDLPDGGAGQFVKVIEALRRETPDTTIEILTPDFRGKMRAAVEAICEAGPDVYNHNLETVPRLYPTIRPGARYYASLRLLEEVKSHDPMIFTKSGIMLGLGEQRLEVHQVMDDMRSADVDFITMGQYLQPTPKHAKVEDFVTPKAFDAFGAIARAKGFLQVASSPLTRSSYHAGDDFAEMRAAREAKLAKERERAQG</sequence>
<gene>
    <name evidence="1" type="primary">lipA</name>
    <name type="ordered locus">ELI_06310</name>
</gene>
<protein>
    <recommendedName>
        <fullName evidence="1">Lipoyl synthase</fullName>
        <ecNumber evidence="1">2.8.1.8</ecNumber>
    </recommendedName>
    <alternativeName>
        <fullName evidence="1">Lip-syn</fullName>
        <shortName evidence="1">LS</shortName>
    </alternativeName>
    <alternativeName>
        <fullName evidence="1">Lipoate synthase</fullName>
    </alternativeName>
    <alternativeName>
        <fullName evidence="1">Lipoic acid synthase</fullName>
    </alternativeName>
    <alternativeName>
        <fullName evidence="1">Sulfur insertion protein LipA</fullName>
    </alternativeName>
</protein>
<comment type="function">
    <text evidence="1">Catalyzes the radical-mediated insertion of two sulfur atoms into the C-6 and C-8 positions of the octanoyl moiety bound to the lipoyl domains of lipoate-dependent enzymes, thereby converting the octanoylated domains into lipoylated derivatives.</text>
</comment>
<comment type="catalytic activity">
    <reaction evidence="1">
        <text>[[Fe-S] cluster scaffold protein carrying a second [4Fe-4S](2+) cluster] + N(6)-octanoyl-L-lysyl-[protein] + 2 oxidized [2Fe-2S]-[ferredoxin] + 2 S-adenosyl-L-methionine + 4 H(+) = [[Fe-S] cluster scaffold protein] + N(6)-[(R)-dihydrolipoyl]-L-lysyl-[protein] + 4 Fe(3+) + 2 hydrogen sulfide + 2 5'-deoxyadenosine + 2 L-methionine + 2 reduced [2Fe-2S]-[ferredoxin]</text>
        <dbReference type="Rhea" id="RHEA:16585"/>
        <dbReference type="Rhea" id="RHEA-COMP:9928"/>
        <dbReference type="Rhea" id="RHEA-COMP:10000"/>
        <dbReference type="Rhea" id="RHEA-COMP:10001"/>
        <dbReference type="Rhea" id="RHEA-COMP:10475"/>
        <dbReference type="Rhea" id="RHEA-COMP:14568"/>
        <dbReference type="Rhea" id="RHEA-COMP:14569"/>
        <dbReference type="ChEBI" id="CHEBI:15378"/>
        <dbReference type="ChEBI" id="CHEBI:17319"/>
        <dbReference type="ChEBI" id="CHEBI:29034"/>
        <dbReference type="ChEBI" id="CHEBI:29919"/>
        <dbReference type="ChEBI" id="CHEBI:33722"/>
        <dbReference type="ChEBI" id="CHEBI:33737"/>
        <dbReference type="ChEBI" id="CHEBI:33738"/>
        <dbReference type="ChEBI" id="CHEBI:57844"/>
        <dbReference type="ChEBI" id="CHEBI:59789"/>
        <dbReference type="ChEBI" id="CHEBI:78809"/>
        <dbReference type="ChEBI" id="CHEBI:83100"/>
        <dbReference type="EC" id="2.8.1.8"/>
    </reaction>
</comment>
<comment type="cofactor">
    <cofactor evidence="1">
        <name>[4Fe-4S] cluster</name>
        <dbReference type="ChEBI" id="CHEBI:49883"/>
    </cofactor>
    <text evidence="1">Binds 2 [4Fe-4S] clusters per subunit. One cluster is coordinated with 3 cysteines and an exchangeable S-adenosyl-L-methionine.</text>
</comment>
<comment type="pathway">
    <text evidence="1">Protein modification; protein lipoylation via endogenous pathway; protein N(6)-(lipoyl)lysine from octanoyl-[acyl-carrier-protein]: step 2/2.</text>
</comment>
<comment type="subcellular location">
    <subcellularLocation>
        <location evidence="1">Cytoplasm</location>
    </subcellularLocation>
</comment>
<comment type="similarity">
    <text evidence="1">Belongs to the radical SAM superfamily. Lipoyl synthase family.</text>
</comment>
<reference key="1">
    <citation type="journal article" date="2009" name="J. Bacteriol.">
        <title>Complete genome sequence of Erythrobacter litoralis HTCC2594.</title>
        <authorList>
            <person name="Oh H.M."/>
            <person name="Giovannoni S.J."/>
            <person name="Ferriera S."/>
            <person name="Johnson J."/>
            <person name="Cho J.C."/>
        </authorList>
    </citation>
    <scope>NUCLEOTIDE SEQUENCE [LARGE SCALE GENOMIC DNA]</scope>
    <source>
        <strain>HTCC2594</strain>
    </source>
</reference>
<dbReference type="EC" id="2.8.1.8" evidence="1"/>
<dbReference type="EMBL" id="CP000157">
    <property type="protein sequence ID" value="ABC63354.1"/>
    <property type="molecule type" value="Genomic_DNA"/>
</dbReference>
<dbReference type="SMR" id="Q2NAD7"/>
<dbReference type="STRING" id="314225.ELI_06310"/>
<dbReference type="KEGG" id="eli:ELI_06310"/>
<dbReference type="eggNOG" id="COG0320">
    <property type="taxonomic scope" value="Bacteria"/>
</dbReference>
<dbReference type="HOGENOM" id="CLU_033144_2_1_5"/>
<dbReference type="UniPathway" id="UPA00538">
    <property type="reaction ID" value="UER00593"/>
</dbReference>
<dbReference type="Proteomes" id="UP000008808">
    <property type="component" value="Chromosome"/>
</dbReference>
<dbReference type="GO" id="GO:0005737">
    <property type="term" value="C:cytoplasm"/>
    <property type="evidence" value="ECO:0007669"/>
    <property type="project" value="UniProtKB-SubCell"/>
</dbReference>
<dbReference type="GO" id="GO:0051539">
    <property type="term" value="F:4 iron, 4 sulfur cluster binding"/>
    <property type="evidence" value="ECO:0007669"/>
    <property type="project" value="UniProtKB-UniRule"/>
</dbReference>
<dbReference type="GO" id="GO:0016992">
    <property type="term" value="F:lipoate synthase activity"/>
    <property type="evidence" value="ECO:0007669"/>
    <property type="project" value="UniProtKB-UniRule"/>
</dbReference>
<dbReference type="GO" id="GO:0046872">
    <property type="term" value="F:metal ion binding"/>
    <property type="evidence" value="ECO:0007669"/>
    <property type="project" value="UniProtKB-KW"/>
</dbReference>
<dbReference type="CDD" id="cd01335">
    <property type="entry name" value="Radical_SAM"/>
    <property type="match status" value="1"/>
</dbReference>
<dbReference type="FunFam" id="3.20.20.70:FF:000040">
    <property type="entry name" value="Lipoyl synthase"/>
    <property type="match status" value="1"/>
</dbReference>
<dbReference type="Gene3D" id="3.20.20.70">
    <property type="entry name" value="Aldolase class I"/>
    <property type="match status" value="1"/>
</dbReference>
<dbReference type="HAMAP" id="MF_00206">
    <property type="entry name" value="Lipoyl_synth"/>
    <property type="match status" value="1"/>
</dbReference>
<dbReference type="InterPro" id="IPR013785">
    <property type="entry name" value="Aldolase_TIM"/>
</dbReference>
<dbReference type="InterPro" id="IPR006638">
    <property type="entry name" value="Elp3/MiaA/NifB-like_rSAM"/>
</dbReference>
<dbReference type="InterPro" id="IPR031691">
    <property type="entry name" value="LIAS_N"/>
</dbReference>
<dbReference type="InterPro" id="IPR003698">
    <property type="entry name" value="Lipoyl_synth"/>
</dbReference>
<dbReference type="InterPro" id="IPR007197">
    <property type="entry name" value="rSAM"/>
</dbReference>
<dbReference type="NCBIfam" id="TIGR00510">
    <property type="entry name" value="lipA"/>
    <property type="match status" value="1"/>
</dbReference>
<dbReference type="NCBIfam" id="NF004019">
    <property type="entry name" value="PRK05481.1"/>
    <property type="match status" value="1"/>
</dbReference>
<dbReference type="NCBIfam" id="NF009544">
    <property type="entry name" value="PRK12928.1"/>
    <property type="match status" value="1"/>
</dbReference>
<dbReference type="PANTHER" id="PTHR10949">
    <property type="entry name" value="LIPOYL SYNTHASE"/>
    <property type="match status" value="1"/>
</dbReference>
<dbReference type="PANTHER" id="PTHR10949:SF0">
    <property type="entry name" value="LIPOYL SYNTHASE, MITOCHONDRIAL"/>
    <property type="match status" value="1"/>
</dbReference>
<dbReference type="Pfam" id="PF16881">
    <property type="entry name" value="LIAS_N"/>
    <property type="match status" value="1"/>
</dbReference>
<dbReference type="Pfam" id="PF04055">
    <property type="entry name" value="Radical_SAM"/>
    <property type="match status" value="1"/>
</dbReference>
<dbReference type="PIRSF" id="PIRSF005963">
    <property type="entry name" value="Lipoyl_synth"/>
    <property type="match status" value="1"/>
</dbReference>
<dbReference type="SFLD" id="SFLDF00271">
    <property type="entry name" value="lipoyl_synthase"/>
    <property type="match status" value="1"/>
</dbReference>
<dbReference type="SFLD" id="SFLDS00029">
    <property type="entry name" value="Radical_SAM"/>
    <property type="match status" value="1"/>
</dbReference>
<dbReference type="SMART" id="SM00729">
    <property type="entry name" value="Elp3"/>
    <property type="match status" value="1"/>
</dbReference>
<dbReference type="SUPFAM" id="SSF102114">
    <property type="entry name" value="Radical SAM enzymes"/>
    <property type="match status" value="1"/>
</dbReference>
<dbReference type="PROSITE" id="PS51918">
    <property type="entry name" value="RADICAL_SAM"/>
    <property type="match status" value="1"/>
</dbReference>